<dbReference type="EMBL" id="AJ938182">
    <property type="protein sequence ID" value="CAI82278.1"/>
    <property type="molecule type" value="Genomic_DNA"/>
</dbReference>
<dbReference type="RefSeq" id="WP_000240855.1">
    <property type="nucleotide sequence ID" value="NC_007622.1"/>
</dbReference>
<dbReference type="PDB" id="5NGM">
    <property type="method" value="EM"/>
    <property type="resolution" value="2.90 A"/>
    <property type="chains" value="A2=1-45"/>
</dbReference>
<dbReference type="PDB" id="5T7V">
    <property type="method" value="EM"/>
    <property type="resolution" value="3.60 A"/>
    <property type="chains" value="LG=2-45"/>
</dbReference>
<dbReference type="PDB" id="6DDG">
    <property type="method" value="EM"/>
    <property type="resolution" value="3.10 A"/>
    <property type="chains" value="P=1-45"/>
</dbReference>
<dbReference type="PDB" id="6FXC">
    <property type="method" value="EM"/>
    <property type="resolution" value="6.76 A"/>
    <property type="chains" value="A2/B2=2-44"/>
</dbReference>
<dbReference type="PDBsum" id="5NGM"/>
<dbReference type="PDBsum" id="5T7V"/>
<dbReference type="PDBsum" id="6DDG"/>
<dbReference type="PDBsum" id="6FXC"/>
<dbReference type="EMDB" id="EMD-0243"/>
<dbReference type="EMDB" id="EMD-26124"/>
<dbReference type="EMDB" id="EMD-26125"/>
<dbReference type="EMDB" id="EMD-3637"/>
<dbReference type="EMDB" id="EMD-3640"/>
<dbReference type="EMDB" id="EMD-7870"/>
<dbReference type="EMDB" id="EMD-8369"/>
<dbReference type="SMR" id="Q2YZB6"/>
<dbReference type="GeneID" id="98347025"/>
<dbReference type="KEGG" id="sab:SAB2590c"/>
<dbReference type="HOGENOM" id="CLU_129938_2_0_9"/>
<dbReference type="GO" id="GO:1990904">
    <property type="term" value="C:ribonucleoprotein complex"/>
    <property type="evidence" value="ECO:0007669"/>
    <property type="project" value="UniProtKB-KW"/>
</dbReference>
<dbReference type="GO" id="GO:0005840">
    <property type="term" value="C:ribosome"/>
    <property type="evidence" value="ECO:0007669"/>
    <property type="project" value="UniProtKB-KW"/>
</dbReference>
<dbReference type="GO" id="GO:0003735">
    <property type="term" value="F:structural constituent of ribosome"/>
    <property type="evidence" value="ECO:0007669"/>
    <property type="project" value="InterPro"/>
</dbReference>
<dbReference type="GO" id="GO:0006412">
    <property type="term" value="P:translation"/>
    <property type="evidence" value="ECO:0007669"/>
    <property type="project" value="UniProtKB-UniRule"/>
</dbReference>
<dbReference type="FunFam" id="1.10.287.3980:FF:000001">
    <property type="entry name" value="Mitochondrial ribosomal protein L34"/>
    <property type="match status" value="1"/>
</dbReference>
<dbReference type="Gene3D" id="1.10.287.3980">
    <property type="match status" value="1"/>
</dbReference>
<dbReference type="HAMAP" id="MF_00391">
    <property type="entry name" value="Ribosomal_bL34"/>
    <property type="match status" value="1"/>
</dbReference>
<dbReference type="InterPro" id="IPR000271">
    <property type="entry name" value="Ribosomal_bL34"/>
</dbReference>
<dbReference type="InterPro" id="IPR020939">
    <property type="entry name" value="Ribosomal_bL34_CS"/>
</dbReference>
<dbReference type="NCBIfam" id="TIGR01030">
    <property type="entry name" value="rpmH_bact"/>
    <property type="match status" value="1"/>
</dbReference>
<dbReference type="PANTHER" id="PTHR14503:SF4">
    <property type="entry name" value="LARGE RIBOSOMAL SUBUNIT PROTEIN BL34M"/>
    <property type="match status" value="1"/>
</dbReference>
<dbReference type="PANTHER" id="PTHR14503">
    <property type="entry name" value="MITOCHONDRIAL RIBOSOMAL PROTEIN 34 FAMILY MEMBER"/>
    <property type="match status" value="1"/>
</dbReference>
<dbReference type="Pfam" id="PF00468">
    <property type="entry name" value="Ribosomal_L34"/>
    <property type="match status" value="1"/>
</dbReference>
<dbReference type="PROSITE" id="PS00784">
    <property type="entry name" value="RIBOSOMAL_L34"/>
    <property type="match status" value="1"/>
</dbReference>
<gene>
    <name evidence="1" type="primary">rpmH</name>
    <name type="ordered locus">SAB2590c</name>
</gene>
<keyword id="KW-0002">3D-structure</keyword>
<keyword id="KW-0687">Ribonucleoprotein</keyword>
<keyword id="KW-0689">Ribosomal protein</keyword>
<accession>Q2YZB6</accession>
<evidence type="ECO:0000255" key="1">
    <source>
        <dbReference type="HAMAP-Rule" id="MF_00391"/>
    </source>
</evidence>
<evidence type="ECO:0000256" key="2">
    <source>
        <dbReference type="SAM" id="MobiDB-lite"/>
    </source>
</evidence>
<evidence type="ECO:0000305" key="3"/>
<evidence type="ECO:0007829" key="4">
    <source>
        <dbReference type="PDB" id="6DDG"/>
    </source>
</evidence>
<protein>
    <recommendedName>
        <fullName evidence="1">Large ribosomal subunit protein bL34</fullName>
    </recommendedName>
    <alternativeName>
        <fullName evidence="3">50S ribosomal protein L34</fullName>
    </alternativeName>
</protein>
<sequence length="45" mass="5434">MVKRTYQPNKRKHSKVHGFRKRMSTKNGRKVLARRRRKGRKVLSA</sequence>
<proteinExistence type="evidence at protein level"/>
<reference key="1">
    <citation type="journal article" date="2007" name="PLoS ONE">
        <title>Molecular correlates of host specialization in Staphylococcus aureus.</title>
        <authorList>
            <person name="Herron-Olson L."/>
            <person name="Fitzgerald J.R."/>
            <person name="Musser J.M."/>
            <person name="Kapur V."/>
        </authorList>
    </citation>
    <scope>NUCLEOTIDE SEQUENCE [LARGE SCALE GENOMIC DNA]</scope>
    <source>
        <strain>bovine RF122 / ET3-1</strain>
    </source>
</reference>
<comment type="similarity">
    <text evidence="1">Belongs to the bacterial ribosomal protein bL34 family.</text>
</comment>
<name>RL34_STAAB</name>
<organism>
    <name type="scientific">Staphylococcus aureus (strain bovine RF122 / ET3-1)</name>
    <dbReference type="NCBI Taxonomy" id="273036"/>
    <lineage>
        <taxon>Bacteria</taxon>
        <taxon>Bacillati</taxon>
        <taxon>Bacillota</taxon>
        <taxon>Bacilli</taxon>
        <taxon>Bacillales</taxon>
        <taxon>Staphylococcaceae</taxon>
        <taxon>Staphylococcus</taxon>
    </lineage>
</organism>
<feature type="chain" id="PRO_1000013458" description="Large ribosomal subunit protein bL34">
    <location>
        <begin position="1"/>
        <end position="45"/>
    </location>
</feature>
<feature type="region of interest" description="Disordered" evidence="2">
    <location>
        <begin position="1"/>
        <end position="45"/>
    </location>
</feature>
<feature type="helix" evidence="4">
    <location>
        <begin position="10"/>
        <end position="17"/>
    </location>
</feature>
<feature type="helix" evidence="4">
    <location>
        <begin position="19"/>
        <end position="22"/>
    </location>
</feature>
<feature type="helix" evidence="4">
    <location>
        <begin position="26"/>
        <end position="38"/>
    </location>
</feature>